<comment type="function">
    <text evidence="1">Part of the ABC transporter complex BtuCDF involved in vitamin B12 import. Involved in the translocation of the substrate across the membrane.</text>
</comment>
<comment type="subunit">
    <text evidence="1">The complex is composed of two ATP-binding proteins (BtuD), two transmembrane proteins (BtuC) and a solute-binding protein (BtuF).</text>
</comment>
<comment type="subcellular location">
    <subcellularLocation>
        <location evidence="1">Cell inner membrane</location>
        <topology evidence="1">Multi-pass membrane protein</topology>
    </subcellularLocation>
</comment>
<comment type="similarity">
    <text evidence="1">Belongs to the binding-protein-dependent transport system permease family. FecCD subfamily.</text>
</comment>
<comment type="sequence caution" evidence="2">
    <conflict type="erroneous initiation">
        <sequence resource="EMBL-CDS" id="AAM85481"/>
    </conflict>
</comment>
<comment type="sequence caution" evidence="2">
    <conflict type="erroneous initiation">
        <sequence resource="EMBL-CDS" id="AAS62418"/>
    </conflict>
</comment>
<organism>
    <name type="scientific">Yersinia pestis</name>
    <dbReference type="NCBI Taxonomy" id="632"/>
    <lineage>
        <taxon>Bacteria</taxon>
        <taxon>Pseudomonadati</taxon>
        <taxon>Pseudomonadota</taxon>
        <taxon>Gammaproteobacteria</taxon>
        <taxon>Enterobacterales</taxon>
        <taxon>Yersiniaceae</taxon>
        <taxon>Yersinia</taxon>
    </lineage>
</organism>
<dbReference type="EMBL" id="AL590842">
    <property type="protein sequence ID" value="CAL21052.1"/>
    <property type="molecule type" value="Genomic_DNA"/>
</dbReference>
<dbReference type="EMBL" id="AE009952">
    <property type="protein sequence ID" value="AAM85481.1"/>
    <property type="status" value="ALT_INIT"/>
    <property type="molecule type" value="Genomic_DNA"/>
</dbReference>
<dbReference type="EMBL" id="AE017042">
    <property type="protein sequence ID" value="AAS62418.1"/>
    <property type="status" value="ALT_INIT"/>
    <property type="molecule type" value="Genomic_DNA"/>
</dbReference>
<dbReference type="PIR" id="AI0295">
    <property type="entry name" value="AI0295"/>
</dbReference>
<dbReference type="RefSeq" id="WP_002220283.1">
    <property type="nucleotide sequence ID" value="NZ_WUCM01000025.1"/>
</dbReference>
<dbReference type="RefSeq" id="YP_002347388.1">
    <property type="nucleotide sequence ID" value="NC_003143.1"/>
</dbReference>
<dbReference type="SMR" id="Q8ZDX4"/>
<dbReference type="IntAct" id="Q8ZDX4">
    <property type="interactions" value="6"/>
</dbReference>
<dbReference type="STRING" id="214092.YPO2425"/>
<dbReference type="PaxDb" id="214092-YPO2425"/>
<dbReference type="DNASU" id="1146861"/>
<dbReference type="EnsemblBacteria" id="AAS62418">
    <property type="protein sequence ID" value="AAS62418"/>
    <property type="gene ID" value="YP_2212"/>
</dbReference>
<dbReference type="GeneID" id="57976252"/>
<dbReference type="KEGG" id="ype:YPO2425"/>
<dbReference type="KEGG" id="ypk:y1914"/>
<dbReference type="KEGG" id="ypm:YP_2212"/>
<dbReference type="PATRIC" id="fig|1028802.3.peg.951"/>
<dbReference type="eggNOG" id="COG4139">
    <property type="taxonomic scope" value="Bacteria"/>
</dbReference>
<dbReference type="HOGENOM" id="CLU_013016_0_3_6"/>
<dbReference type="OMA" id="SVAMRGW"/>
<dbReference type="OrthoDB" id="9055647at2"/>
<dbReference type="Proteomes" id="UP000000815">
    <property type="component" value="Chromosome"/>
</dbReference>
<dbReference type="Proteomes" id="UP000001019">
    <property type="component" value="Chromosome"/>
</dbReference>
<dbReference type="Proteomes" id="UP000002490">
    <property type="component" value="Chromosome"/>
</dbReference>
<dbReference type="GO" id="GO:0005886">
    <property type="term" value="C:plasma membrane"/>
    <property type="evidence" value="ECO:0000318"/>
    <property type="project" value="GO_Central"/>
</dbReference>
<dbReference type="GO" id="GO:0022857">
    <property type="term" value="F:transmembrane transporter activity"/>
    <property type="evidence" value="ECO:0000318"/>
    <property type="project" value="GO_Central"/>
</dbReference>
<dbReference type="GO" id="GO:0090482">
    <property type="term" value="F:vitamin transmembrane transporter activity"/>
    <property type="evidence" value="ECO:0007669"/>
    <property type="project" value="UniProtKB-UniRule"/>
</dbReference>
<dbReference type="GO" id="GO:0015889">
    <property type="term" value="P:cobalamin transport"/>
    <property type="evidence" value="ECO:0000318"/>
    <property type="project" value="GO_Central"/>
</dbReference>
<dbReference type="CDD" id="cd06550">
    <property type="entry name" value="TM_ABC_iron-siderophores_like"/>
    <property type="match status" value="1"/>
</dbReference>
<dbReference type="FunFam" id="1.10.3470.10:FF:000001">
    <property type="entry name" value="Vitamin B12 ABC transporter permease BtuC"/>
    <property type="match status" value="1"/>
</dbReference>
<dbReference type="Gene3D" id="1.10.3470.10">
    <property type="entry name" value="ABC transporter involved in vitamin B12 uptake, BtuC"/>
    <property type="match status" value="1"/>
</dbReference>
<dbReference type="HAMAP" id="MF_01004">
    <property type="entry name" value="BtuC"/>
    <property type="match status" value="1"/>
</dbReference>
<dbReference type="InterPro" id="IPR037294">
    <property type="entry name" value="ABC_BtuC-like"/>
</dbReference>
<dbReference type="InterPro" id="IPR023691">
    <property type="entry name" value="ABC_transptr_BtuC"/>
</dbReference>
<dbReference type="InterPro" id="IPR000522">
    <property type="entry name" value="ABC_transptr_permease_BtuC"/>
</dbReference>
<dbReference type="NCBIfam" id="NF003001">
    <property type="entry name" value="PRK03784.1"/>
    <property type="match status" value="1"/>
</dbReference>
<dbReference type="PANTHER" id="PTHR30472">
    <property type="entry name" value="FERRIC ENTEROBACTIN TRANSPORT SYSTEM PERMEASE PROTEIN"/>
    <property type="match status" value="1"/>
</dbReference>
<dbReference type="PANTHER" id="PTHR30472:SF29">
    <property type="entry name" value="VITAMIN B12 IMPORT SYSTEM PERMEASE PROTEIN BTUC"/>
    <property type="match status" value="1"/>
</dbReference>
<dbReference type="Pfam" id="PF01032">
    <property type="entry name" value="FecCD"/>
    <property type="match status" value="1"/>
</dbReference>
<dbReference type="SUPFAM" id="SSF81345">
    <property type="entry name" value="ABC transporter involved in vitamin B12 uptake, BtuC"/>
    <property type="match status" value="1"/>
</dbReference>
<sequence length="335" mass="36332">MQTSQLFTALQQRQRQRDYRYLTGLVVMLLFALLISLCAGDVWIWPEHWFSESGKLFVWQLRLPRSMAVIMVGASLAVSGAVMQALFENPLAEPGLLGVANGAGVALVTAVLLGHGLLPIWVLSTCAIIGALLMTSILLSFTRRRLLTNAQLLLVGVALGIICSAMMTWAVYFSTSLDLRQLMYWMMGGFSGVDWRQQSLVLALLPTVIWLCCQGRVLNFMSLGEQQARQLGVSLHLWRNLLVLAIGLLVGISVALAGVISFIGLVIPHILRLTGLTDQRRLLAGCAFAGGGVLLLADVVARTVLSSAELPIGVVTATLGSPLFIWLLIRVKGVK</sequence>
<keyword id="KW-0997">Cell inner membrane</keyword>
<keyword id="KW-1003">Cell membrane</keyword>
<keyword id="KW-0472">Membrane</keyword>
<keyword id="KW-1185">Reference proteome</keyword>
<keyword id="KW-0812">Transmembrane</keyword>
<keyword id="KW-1133">Transmembrane helix</keyword>
<keyword id="KW-0813">Transport</keyword>
<protein>
    <recommendedName>
        <fullName evidence="1">Vitamin B12 import system permease protein BtuC</fullName>
    </recommendedName>
</protein>
<feature type="chain" id="PRO_0000059983" description="Vitamin B12 import system permease protein BtuC">
    <location>
        <begin position="1"/>
        <end position="335"/>
    </location>
</feature>
<feature type="transmembrane region" description="Helical" evidence="1">
    <location>
        <begin position="21"/>
        <end position="43"/>
    </location>
</feature>
<feature type="transmembrane region" description="Helical" evidence="1">
    <location>
        <begin position="65"/>
        <end position="87"/>
    </location>
</feature>
<feature type="transmembrane region" description="Helical" evidence="1">
    <location>
        <begin position="94"/>
        <end position="113"/>
    </location>
</feature>
<feature type="transmembrane region" description="Helical" evidence="1">
    <location>
        <begin position="117"/>
        <end position="139"/>
    </location>
</feature>
<feature type="transmembrane region" description="Helical" evidence="1">
    <location>
        <begin position="152"/>
        <end position="174"/>
    </location>
</feature>
<feature type="transmembrane region" description="Helical" evidence="1">
    <location>
        <begin position="241"/>
        <end position="263"/>
    </location>
</feature>
<feature type="transmembrane region" description="Helical" evidence="1">
    <location>
        <begin position="283"/>
        <end position="305"/>
    </location>
</feature>
<feature type="transmembrane region" description="Helical" evidence="1">
    <location>
        <begin position="310"/>
        <end position="329"/>
    </location>
</feature>
<evidence type="ECO:0000255" key="1">
    <source>
        <dbReference type="HAMAP-Rule" id="MF_01004"/>
    </source>
</evidence>
<evidence type="ECO:0000305" key="2"/>
<name>BTUC_YERPE</name>
<gene>
    <name evidence="1" type="primary">btuC</name>
    <name type="ordered locus">YPO2425</name>
    <name type="ordered locus">y1914</name>
    <name type="ordered locus">YP_2212</name>
</gene>
<accession>Q8ZDX4</accession>
<accession>Q0WEA0</accession>
<reference key="1">
    <citation type="journal article" date="2001" name="Nature">
        <title>Genome sequence of Yersinia pestis, the causative agent of plague.</title>
        <authorList>
            <person name="Parkhill J."/>
            <person name="Wren B.W."/>
            <person name="Thomson N.R."/>
            <person name="Titball R.W."/>
            <person name="Holden M.T.G."/>
            <person name="Prentice M.B."/>
            <person name="Sebaihia M."/>
            <person name="James K.D."/>
            <person name="Churcher C.M."/>
            <person name="Mungall K.L."/>
            <person name="Baker S."/>
            <person name="Basham D."/>
            <person name="Bentley S.D."/>
            <person name="Brooks K."/>
            <person name="Cerdeno-Tarraga A.-M."/>
            <person name="Chillingworth T."/>
            <person name="Cronin A."/>
            <person name="Davies R.M."/>
            <person name="Davis P."/>
            <person name="Dougan G."/>
            <person name="Feltwell T."/>
            <person name="Hamlin N."/>
            <person name="Holroyd S."/>
            <person name="Jagels K."/>
            <person name="Karlyshev A.V."/>
            <person name="Leather S."/>
            <person name="Moule S."/>
            <person name="Oyston P.C.F."/>
            <person name="Quail M.A."/>
            <person name="Rutherford K.M."/>
            <person name="Simmonds M."/>
            <person name="Skelton J."/>
            <person name="Stevens K."/>
            <person name="Whitehead S."/>
            <person name="Barrell B.G."/>
        </authorList>
    </citation>
    <scope>NUCLEOTIDE SEQUENCE [LARGE SCALE GENOMIC DNA]</scope>
    <source>
        <strain>CO-92 / Biovar Orientalis</strain>
    </source>
</reference>
<reference key="2">
    <citation type="journal article" date="2002" name="J. Bacteriol.">
        <title>Genome sequence of Yersinia pestis KIM.</title>
        <authorList>
            <person name="Deng W."/>
            <person name="Burland V."/>
            <person name="Plunkett G. III"/>
            <person name="Boutin A."/>
            <person name="Mayhew G.F."/>
            <person name="Liss P."/>
            <person name="Perna N.T."/>
            <person name="Rose D.J."/>
            <person name="Mau B."/>
            <person name="Zhou S."/>
            <person name="Schwartz D.C."/>
            <person name="Fetherston J.D."/>
            <person name="Lindler L.E."/>
            <person name="Brubaker R.R."/>
            <person name="Plano G.V."/>
            <person name="Straley S.C."/>
            <person name="McDonough K.A."/>
            <person name="Nilles M.L."/>
            <person name="Matson J.S."/>
            <person name="Blattner F.R."/>
            <person name="Perry R.D."/>
        </authorList>
    </citation>
    <scope>NUCLEOTIDE SEQUENCE [LARGE SCALE GENOMIC DNA]</scope>
    <source>
        <strain>KIM10+ / Biovar Mediaevalis</strain>
    </source>
</reference>
<reference key="3">
    <citation type="journal article" date="2004" name="DNA Res.">
        <title>Complete genome sequence of Yersinia pestis strain 91001, an isolate avirulent to humans.</title>
        <authorList>
            <person name="Song Y."/>
            <person name="Tong Z."/>
            <person name="Wang J."/>
            <person name="Wang L."/>
            <person name="Guo Z."/>
            <person name="Han Y."/>
            <person name="Zhang J."/>
            <person name="Pei D."/>
            <person name="Zhou D."/>
            <person name="Qin H."/>
            <person name="Pang X."/>
            <person name="Han Y."/>
            <person name="Zhai J."/>
            <person name="Li M."/>
            <person name="Cui B."/>
            <person name="Qi Z."/>
            <person name="Jin L."/>
            <person name="Dai R."/>
            <person name="Chen F."/>
            <person name="Li S."/>
            <person name="Ye C."/>
            <person name="Du Z."/>
            <person name="Lin W."/>
            <person name="Wang J."/>
            <person name="Yu J."/>
            <person name="Yang H."/>
            <person name="Wang J."/>
            <person name="Huang P."/>
            <person name="Yang R."/>
        </authorList>
    </citation>
    <scope>NUCLEOTIDE SEQUENCE [LARGE SCALE GENOMIC DNA]</scope>
    <source>
        <strain>91001 / Biovar Mediaevalis</strain>
    </source>
</reference>
<proteinExistence type="inferred from homology"/>